<evidence type="ECO:0000255" key="1">
    <source>
        <dbReference type="HAMAP-Rule" id="MF_01569"/>
    </source>
</evidence>
<proteinExistence type="inferred from homology"/>
<keyword id="KW-0030">Aminoacyl-tRNA synthetase</keyword>
<keyword id="KW-0067">ATP-binding</keyword>
<keyword id="KW-0963">Cytoplasm</keyword>
<keyword id="KW-0436">Ligase</keyword>
<keyword id="KW-0547">Nucleotide-binding</keyword>
<keyword id="KW-0648">Protein biosynthesis</keyword>
<keyword id="KW-1185">Reference proteome</keyword>
<accession>A1A7N8</accession>
<dbReference type="EC" id="6.1.1.15" evidence="1"/>
<dbReference type="EMBL" id="CP000468">
    <property type="protein sequence ID" value="ABI99677.1"/>
    <property type="molecule type" value="Genomic_DNA"/>
</dbReference>
<dbReference type="RefSeq" id="WP_001260694.1">
    <property type="nucleotide sequence ID" value="NZ_CADILS010000027.1"/>
</dbReference>
<dbReference type="SMR" id="A1A7N8"/>
<dbReference type="KEGG" id="ecv:APECO1_1793"/>
<dbReference type="HOGENOM" id="CLU_016739_0_0_6"/>
<dbReference type="Proteomes" id="UP000008216">
    <property type="component" value="Chromosome"/>
</dbReference>
<dbReference type="GO" id="GO:0005829">
    <property type="term" value="C:cytosol"/>
    <property type="evidence" value="ECO:0007669"/>
    <property type="project" value="TreeGrafter"/>
</dbReference>
<dbReference type="GO" id="GO:0002161">
    <property type="term" value="F:aminoacyl-tRNA deacylase activity"/>
    <property type="evidence" value="ECO:0007669"/>
    <property type="project" value="InterPro"/>
</dbReference>
<dbReference type="GO" id="GO:0005524">
    <property type="term" value="F:ATP binding"/>
    <property type="evidence" value="ECO:0007669"/>
    <property type="project" value="UniProtKB-UniRule"/>
</dbReference>
<dbReference type="GO" id="GO:0004827">
    <property type="term" value="F:proline-tRNA ligase activity"/>
    <property type="evidence" value="ECO:0007669"/>
    <property type="project" value="UniProtKB-UniRule"/>
</dbReference>
<dbReference type="GO" id="GO:0006433">
    <property type="term" value="P:prolyl-tRNA aminoacylation"/>
    <property type="evidence" value="ECO:0007669"/>
    <property type="project" value="UniProtKB-UniRule"/>
</dbReference>
<dbReference type="CDD" id="cd04334">
    <property type="entry name" value="ProRS-INS"/>
    <property type="match status" value="1"/>
</dbReference>
<dbReference type="CDD" id="cd00861">
    <property type="entry name" value="ProRS_anticodon_short"/>
    <property type="match status" value="1"/>
</dbReference>
<dbReference type="CDD" id="cd00779">
    <property type="entry name" value="ProRS_core_prok"/>
    <property type="match status" value="1"/>
</dbReference>
<dbReference type="FunFam" id="3.30.930.10:FF:000043">
    <property type="entry name" value="Proline--tRNA ligase"/>
    <property type="match status" value="1"/>
</dbReference>
<dbReference type="FunFam" id="3.30.930.10:FF:000097">
    <property type="entry name" value="Proline--tRNA ligase"/>
    <property type="match status" value="1"/>
</dbReference>
<dbReference type="FunFam" id="3.40.50.800:FF:000006">
    <property type="entry name" value="Proline--tRNA ligase"/>
    <property type="match status" value="1"/>
</dbReference>
<dbReference type="FunFam" id="3.90.960.10:FF:000001">
    <property type="entry name" value="Proline--tRNA ligase"/>
    <property type="match status" value="1"/>
</dbReference>
<dbReference type="Gene3D" id="3.40.50.800">
    <property type="entry name" value="Anticodon-binding domain"/>
    <property type="match status" value="1"/>
</dbReference>
<dbReference type="Gene3D" id="3.30.930.10">
    <property type="entry name" value="Bira Bifunctional Protein, Domain 2"/>
    <property type="match status" value="2"/>
</dbReference>
<dbReference type="Gene3D" id="3.90.960.10">
    <property type="entry name" value="YbaK/aminoacyl-tRNA synthetase-associated domain"/>
    <property type="match status" value="1"/>
</dbReference>
<dbReference type="HAMAP" id="MF_01569">
    <property type="entry name" value="Pro_tRNA_synth_type1"/>
    <property type="match status" value="1"/>
</dbReference>
<dbReference type="InterPro" id="IPR002314">
    <property type="entry name" value="aa-tRNA-synt_IIb"/>
</dbReference>
<dbReference type="InterPro" id="IPR006195">
    <property type="entry name" value="aa-tRNA-synth_II"/>
</dbReference>
<dbReference type="InterPro" id="IPR045864">
    <property type="entry name" value="aa-tRNA-synth_II/BPL/LPL"/>
</dbReference>
<dbReference type="InterPro" id="IPR004154">
    <property type="entry name" value="Anticodon-bd"/>
</dbReference>
<dbReference type="InterPro" id="IPR036621">
    <property type="entry name" value="Anticodon-bd_dom_sf"/>
</dbReference>
<dbReference type="InterPro" id="IPR002316">
    <property type="entry name" value="Pro-tRNA-ligase_IIa"/>
</dbReference>
<dbReference type="InterPro" id="IPR004500">
    <property type="entry name" value="Pro-tRNA-synth_IIa_bac-type"/>
</dbReference>
<dbReference type="InterPro" id="IPR023717">
    <property type="entry name" value="Pro-tRNA-Synthase_IIa_type1"/>
</dbReference>
<dbReference type="InterPro" id="IPR050062">
    <property type="entry name" value="Pro-tRNA_synthetase"/>
</dbReference>
<dbReference type="InterPro" id="IPR044140">
    <property type="entry name" value="ProRS_anticodon_short"/>
</dbReference>
<dbReference type="InterPro" id="IPR033730">
    <property type="entry name" value="ProRS_core_prok"/>
</dbReference>
<dbReference type="InterPro" id="IPR036754">
    <property type="entry name" value="YbaK/aa-tRNA-synt-asso_dom_sf"/>
</dbReference>
<dbReference type="InterPro" id="IPR007214">
    <property type="entry name" value="YbaK/aa-tRNA-synth-assoc-dom"/>
</dbReference>
<dbReference type="NCBIfam" id="NF006625">
    <property type="entry name" value="PRK09194.1"/>
    <property type="match status" value="1"/>
</dbReference>
<dbReference type="NCBIfam" id="TIGR00409">
    <property type="entry name" value="proS_fam_II"/>
    <property type="match status" value="1"/>
</dbReference>
<dbReference type="PANTHER" id="PTHR42753">
    <property type="entry name" value="MITOCHONDRIAL RIBOSOME PROTEIN L39/PROLYL-TRNA LIGASE FAMILY MEMBER"/>
    <property type="match status" value="1"/>
</dbReference>
<dbReference type="PANTHER" id="PTHR42753:SF2">
    <property type="entry name" value="PROLINE--TRNA LIGASE"/>
    <property type="match status" value="1"/>
</dbReference>
<dbReference type="Pfam" id="PF03129">
    <property type="entry name" value="HGTP_anticodon"/>
    <property type="match status" value="1"/>
</dbReference>
<dbReference type="Pfam" id="PF00587">
    <property type="entry name" value="tRNA-synt_2b"/>
    <property type="match status" value="1"/>
</dbReference>
<dbReference type="Pfam" id="PF04073">
    <property type="entry name" value="tRNA_edit"/>
    <property type="match status" value="1"/>
</dbReference>
<dbReference type="PIRSF" id="PIRSF001535">
    <property type="entry name" value="ProRS_1"/>
    <property type="match status" value="1"/>
</dbReference>
<dbReference type="PRINTS" id="PR01046">
    <property type="entry name" value="TRNASYNTHPRO"/>
</dbReference>
<dbReference type="SUPFAM" id="SSF52954">
    <property type="entry name" value="Class II aaRS ABD-related"/>
    <property type="match status" value="1"/>
</dbReference>
<dbReference type="SUPFAM" id="SSF55681">
    <property type="entry name" value="Class II aaRS and biotin synthetases"/>
    <property type="match status" value="1"/>
</dbReference>
<dbReference type="SUPFAM" id="SSF55826">
    <property type="entry name" value="YbaK/ProRS associated domain"/>
    <property type="match status" value="1"/>
</dbReference>
<dbReference type="PROSITE" id="PS50862">
    <property type="entry name" value="AA_TRNA_LIGASE_II"/>
    <property type="match status" value="1"/>
</dbReference>
<protein>
    <recommendedName>
        <fullName evidence="1">Proline--tRNA ligase</fullName>
        <ecNumber evidence="1">6.1.1.15</ecNumber>
    </recommendedName>
    <alternativeName>
        <fullName evidence="1">Prolyl-tRNA synthetase</fullName>
        <shortName evidence="1">ProRS</shortName>
    </alternativeName>
</protein>
<name>SYP_ECOK1</name>
<reference key="1">
    <citation type="journal article" date="2007" name="J. Bacteriol.">
        <title>The genome sequence of avian pathogenic Escherichia coli strain O1:K1:H7 shares strong similarities with human extraintestinal pathogenic E. coli genomes.</title>
        <authorList>
            <person name="Johnson T.J."/>
            <person name="Kariyawasam S."/>
            <person name="Wannemuehler Y."/>
            <person name="Mangiamele P."/>
            <person name="Johnson S.J."/>
            <person name="Doetkott C."/>
            <person name="Skyberg J.A."/>
            <person name="Lynne A.M."/>
            <person name="Johnson J.R."/>
            <person name="Nolan L.K."/>
        </authorList>
    </citation>
    <scope>NUCLEOTIDE SEQUENCE [LARGE SCALE GENOMIC DNA]</scope>
</reference>
<feature type="chain" id="PRO_0000288325" description="Proline--tRNA ligase">
    <location>
        <begin position="1"/>
        <end position="572"/>
    </location>
</feature>
<organism>
    <name type="scientific">Escherichia coli O1:K1 / APEC</name>
    <dbReference type="NCBI Taxonomy" id="405955"/>
    <lineage>
        <taxon>Bacteria</taxon>
        <taxon>Pseudomonadati</taxon>
        <taxon>Pseudomonadota</taxon>
        <taxon>Gammaproteobacteria</taxon>
        <taxon>Enterobacterales</taxon>
        <taxon>Enterobacteriaceae</taxon>
        <taxon>Escherichia</taxon>
    </lineage>
</organism>
<sequence length="572" mass="63603">MRTSQYLLSTLKETPADAEVISHQLMLRAGMIRKLASGLYTWLPTGVRVLKKVENIVREEMNNAGAIEVLMPVVQPSELWQESGRWEQYGPELLRIADRGDRPFVLGPTHEEVITDLIRNELSSYKQLPLNFYQIQTKFRDEVRPRFGVMRSREFLMKDAYSFHTSQESLQETYDAMYAAYSKIFSRMGLDFRAVQADTGSIGGSASHEFQVLAQSGEDDVVFSDTSDYAANIELAEAIAPKEPRAAATQEMTLVDTPNAKTIAELVEQFNLPIEKTVKTLLVKAVEGSSFPLVALLVRGDHELNEVKAEKLPQVASPLTFATEEEIRAVVKAGPGSLGPVNMPIPVVIDRTVAAMSDFAAGANIDGKHYFGINWDRDVATPEIADIRNVVAGDPSPDGQGTLLIKRGIEVGHIFQLGTKYSEALKASVQGEDGRNQILTMGCYGIGVTRVVAAAIEQNYDERGIVWPDAIAPFQVAILPMNMHKSFRVQELAEKLYSELRAQGIEVLLDDRKERPGVMFADMELIGIPHTIVLGDRNLDNDDIEYKYRRNGEKQLIKTGDIVDYLVKQIKG</sequence>
<gene>
    <name evidence="1" type="primary">proS</name>
    <name type="ordered locus">Ecok1_01840</name>
    <name type="ORF">APECO1_1793</name>
</gene>
<comment type="function">
    <text evidence="1">Catalyzes the attachment of proline to tRNA(Pro) in a two-step reaction: proline is first activated by ATP to form Pro-AMP and then transferred to the acceptor end of tRNA(Pro). As ProRS can inadvertently accommodate and process non-cognate amino acids such as alanine and cysteine, to avoid such errors it has two additional distinct editing activities against alanine. One activity is designated as 'pretransfer' editing and involves the tRNA(Pro)-independent hydrolysis of activated Ala-AMP. The other activity is designated 'posttransfer' editing and involves deacylation of mischarged Ala-tRNA(Pro). The misacylated Cys-tRNA(Pro) is not edited by ProRS.</text>
</comment>
<comment type="catalytic activity">
    <reaction evidence="1">
        <text>tRNA(Pro) + L-proline + ATP = L-prolyl-tRNA(Pro) + AMP + diphosphate</text>
        <dbReference type="Rhea" id="RHEA:14305"/>
        <dbReference type="Rhea" id="RHEA-COMP:9700"/>
        <dbReference type="Rhea" id="RHEA-COMP:9702"/>
        <dbReference type="ChEBI" id="CHEBI:30616"/>
        <dbReference type="ChEBI" id="CHEBI:33019"/>
        <dbReference type="ChEBI" id="CHEBI:60039"/>
        <dbReference type="ChEBI" id="CHEBI:78442"/>
        <dbReference type="ChEBI" id="CHEBI:78532"/>
        <dbReference type="ChEBI" id="CHEBI:456215"/>
        <dbReference type="EC" id="6.1.1.15"/>
    </reaction>
</comment>
<comment type="subunit">
    <text evidence="1">Homodimer.</text>
</comment>
<comment type="subcellular location">
    <subcellularLocation>
        <location evidence="1">Cytoplasm</location>
    </subcellularLocation>
</comment>
<comment type="domain">
    <text evidence="1">Consists of three domains: the N-terminal catalytic domain, the editing domain and the C-terminal anticodon-binding domain.</text>
</comment>
<comment type="similarity">
    <text evidence="1">Belongs to the class-II aminoacyl-tRNA synthetase family. ProS type 1 subfamily.</text>
</comment>